<name>DLTC_LACDB</name>
<gene>
    <name evidence="1" type="primary">dltC</name>
    <name type="ordered locus">LBUL_1983</name>
</gene>
<organism>
    <name type="scientific">Lactobacillus delbrueckii subsp. bulgaricus (strain ATCC BAA-365 / Lb-18)</name>
    <dbReference type="NCBI Taxonomy" id="321956"/>
    <lineage>
        <taxon>Bacteria</taxon>
        <taxon>Bacillati</taxon>
        <taxon>Bacillota</taxon>
        <taxon>Bacilli</taxon>
        <taxon>Lactobacillales</taxon>
        <taxon>Lactobacillaceae</taxon>
        <taxon>Lactobacillus</taxon>
    </lineage>
</organism>
<keyword id="KW-0961">Cell wall biogenesis/degradation</keyword>
<keyword id="KW-0963">Cytoplasm</keyword>
<keyword id="KW-0596">Phosphopantetheine</keyword>
<keyword id="KW-0597">Phosphoprotein</keyword>
<reference key="1">
    <citation type="journal article" date="2006" name="Proc. Natl. Acad. Sci. U.S.A.">
        <title>Comparative genomics of the lactic acid bacteria.</title>
        <authorList>
            <person name="Makarova K.S."/>
            <person name="Slesarev A."/>
            <person name="Wolf Y.I."/>
            <person name="Sorokin A."/>
            <person name="Mirkin B."/>
            <person name="Koonin E.V."/>
            <person name="Pavlov A."/>
            <person name="Pavlova N."/>
            <person name="Karamychev V."/>
            <person name="Polouchine N."/>
            <person name="Shakhova V."/>
            <person name="Grigoriev I."/>
            <person name="Lou Y."/>
            <person name="Rohksar D."/>
            <person name="Lucas S."/>
            <person name="Huang K."/>
            <person name="Goodstein D.M."/>
            <person name="Hawkins T."/>
            <person name="Plengvidhya V."/>
            <person name="Welker D."/>
            <person name="Hughes J."/>
            <person name="Goh Y."/>
            <person name="Benson A."/>
            <person name="Baldwin K."/>
            <person name="Lee J.-H."/>
            <person name="Diaz-Muniz I."/>
            <person name="Dosti B."/>
            <person name="Smeianov V."/>
            <person name="Wechter W."/>
            <person name="Barabote R."/>
            <person name="Lorca G."/>
            <person name="Altermann E."/>
            <person name="Barrangou R."/>
            <person name="Ganesan B."/>
            <person name="Xie Y."/>
            <person name="Rawsthorne H."/>
            <person name="Tamir D."/>
            <person name="Parker C."/>
            <person name="Breidt F."/>
            <person name="Broadbent J.R."/>
            <person name="Hutkins R."/>
            <person name="O'Sullivan D."/>
            <person name="Steele J."/>
            <person name="Unlu G."/>
            <person name="Saier M.H. Jr."/>
            <person name="Klaenhammer T."/>
            <person name="Richardson P."/>
            <person name="Kozyavkin S."/>
            <person name="Weimer B.C."/>
            <person name="Mills D.A."/>
        </authorList>
    </citation>
    <scope>NUCLEOTIDE SEQUENCE [LARGE SCALE GENOMIC DNA]</scope>
    <source>
        <strain>ATCC BAA-365 / Lb-18</strain>
    </source>
</reference>
<feature type="chain" id="PRO_1000024916" description="D-alanyl carrier protein">
    <location>
        <begin position="1"/>
        <end position="80"/>
    </location>
</feature>
<feature type="domain" description="Carrier" evidence="1">
    <location>
        <begin position="1"/>
        <end position="77"/>
    </location>
</feature>
<feature type="modified residue" description="O-(pantetheine 4'-phosphoryl)serine" evidence="1">
    <location>
        <position position="35"/>
    </location>
</feature>
<dbReference type="EMBL" id="CP000412">
    <property type="protein sequence ID" value="ABJ59363.1"/>
    <property type="molecule type" value="Genomic_DNA"/>
</dbReference>
<dbReference type="RefSeq" id="WP_003620019.1">
    <property type="nucleotide sequence ID" value="NC_008529.1"/>
</dbReference>
<dbReference type="SMR" id="Q047K9"/>
<dbReference type="KEGG" id="lbu:LBUL_1983"/>
<dbReference type="HOGENOM" id="CLU_108696_19_0_9"/>
<dbReference type="BioCyc" id="LDEL321956:LBUL_RS09375-MONOMER"/>
<dbReference type="UniPathway" id="UPA00556"/>
<dbReference type="GO" id="GO:0005737">
    <property type="term" value="C:cytoplasm"/>
    <property type="evidence" value="ECO:0007669"/>
    <property type="project" value="UniProtKB-SubCell"/>
</dbReference>
<dbReference type="GO" id="GO:0036370">
    <property type="term" value="F:D-alanyl carrier activity"/>
    <property type="evidence" value="ECO:0007669"/>
    <property type="project" value="UniProtKB-UniRule"/>
</dbReference>
<dbReference type="GO" id="GO:0071555">
    <property type="term" value="P:cell wall organization"/>
    <property type="evidence" value="ECO:0007669"/>
    <property type="project" value="UniProtKB-KW"/>
</dbReference>
<dbReference type="GO" id="GO:0070395">
    <property type="term" value="P:lipoteichoic acid biosynthetic process"/>
    <property type="evidence" value="ECO:0007669"/>
    <property type="project" value="UniProtKB-UniRule"/>
</dbReference>
<dbReference type="Gene3D" id="1.10.1200.10">
    <property type="entry name" value="ACP-like"/>
    <property type="match status" value="1"/>
</dbReference>
<dbReference type="HAMAP" id="MF_00565">
    <property type="entry name" value="DltC"/>
    <property type="match status" value="1"/>
</dbReference>
<dbReference type="InterPro" id="IPR036736">
    <property type="entry name" value="ACP-like_sf"/>
</dbReference>
<dbReference type="InterPro" id="IPR003230">
    <property type="entry name" value="DltC"/>
</dbReference>
<dbReference type="InterPro" id="IPR009081">
    <property type="entry name" value="PP-bd_ACP"/>
</dbReference>
<dbReference type="NCBIfam" id="TIGR01688">
    <property type="entry name" value="dltC"/>
    <property type="match status" value="1"/>
</dbReference>
<dbReference type="NCBIfam" id="NF003464">
    <property type="entry name" value="PRK05087.1"/>
    <property type="match status" value="1"/>
</dbReference>
<dbReference type="Pfam" id="PF00550">
    <property type="entry name" value="PP-binding"/>
    <property type="match status" value="1"/>
</dbReference>
<dbReference type="SUPFAM" id="SSF47336">
    <property type="entry name" value="ACP-like"/>
    <property type="match status" value="1"/>
</dbReference>
<dbReference type="PROSITE" id="PS50075">
    <property type="entry name" value="CARRIER"/>
    <property type="match status" value="1"/>
</dbReference>
<accession>Q047K9</accession>
<proteinExistence type="inferred from homology"/>
<comment type="function">
    <text evidence="1">Carrier protein involved in the D-alanylation of lipoteichoic acid (LTA). The loading of thioester-linked D-alanine onto DltC is catalyzed by D-alanine--D-alanyl carrier protein ligase DltA. The DltC-carried D-alanyl group is further transferred to cell membrane phosphatidylglycerol (PG) by forming an ester bond, probably catalyzed by DltD. D-alanylation of LTA plays an important role in modulating the properties of the cell wall in Gram-positive bacteria, influencing the net charge of the cell wall.</text>
</comment>
<comment type="pathway">
    <text evidence="1">Cell wall biogenesis; lipoteichoic acid biosynthesis.</text>
</comment>
<comment type="subcellular location">
    <subcellularLocation>
        <location evidence="1">Cytoplasm</location>
    </subcellularLocation>
</comment>
<comment type="PTM">
    <text evidence="1">4'-phosphopantetheine is transferred from CoA to a specific serine of apo-DCP.</text>
</comment>
<comment type="similarity">
    <text evidence="1">Belongs to the DltC family.</text>
</comment>
<evidence type="ECO:0000255" key="1">
    <source>
        <dbReference type="HAMAP-Rule" id="MF_00565"/>
    </source>
</evidence>
<sequence>MDIQKQIVDILAEATGEDFSDNMDQELYESGIMDSMTTVQMLLTLQETFDITVPVSEFNRDDWNTPNKLVEQVKKLQDEE</sequence>
<protein>
    <recommendedName>
        <fullName evidence="1">D-alanyl carrier protein</fullName>
        <shortName evidence="1">DCP</shortName>
    </recommendedName>
    <alternativeName>
        <fullName evidence="1">D-alanine--poly(phosphoribitol) ligase subunit 2</fullName>
    </alternativeName>
</protein>